<evidence type="ECO:0000255" key="1"/>
<evidence type="ECO:0000255" key="2">
    <source>
        <dbReference type="PROSITE-ProRule" id="PRU00521"/>
    </source>
</evidence>
<evidence type="ECO:0000269" key="3">
    <source>
    </source>
</evidence>
<evidence type="ECO:0000305" key="4"/>
<sequence length="314" mass="35823">MMMVLRNLSMEPTFALLGFTDYPKLQIPLFLVFLLMYVITVVGNLGMIIIIKINPKFHTPMYFFLSHLSFVDFCYSSIVTPKLLENLVMADKSIFYFSCMMQYFLSCTAVVTESFLLAVMAYDRFVAICNPLLYTVAMSQRLCALLVAGSYLWGMFGPLVLLCYALRLNFSGPNVINHFFCEYTALISVSGSDILIPHLLLFSFATFNEMCTLLIILTSYVFIFVTVLKIRSVSGRHKAFSTWASHLTSITIFHGTILFLYCVPNSKNSRQTVKVASVFYTVVNPMLNPLIYSLRNKDVKDAFWKLIHTQVPFH</sequence>
<protein>
    <recommendedName>
        <fullName>Olfactory receptor 5D14</fullName>
    </recommendedName>
    <alternativeName>
        <fullName>Olfactory receptor OR11-141</fullName>
    </alternativeName>
    <alternativeName>
        <fullName>Olfactory receptor OR11-150</fullName>
    </alternativeName>
</protein>
<feature type="chain" id="PRO_0000150592" description="Olfactory receptor 5D14">
    <location>
        <begin position="1"/>
        <end position="314"/>
    </location>
</feature>
<feature type="topological domain" description="Extracellular" evidence="1">
    <location>
        <begin position="1"/>
        <end position="27"/>
    </location>
</feature>
<feature type="transmembrane region" description="Helical; Name=1" evidence="1">
    <location>
        <begin position="28"/>
        <end position="48"/>
    </location>
</feature>
<feature type="topological domain" description="Cytoplasmic" evidence="1">
    <location>
        <begin position="49"/>
        <end position="56"/>
    </location>
</feature>
<feature type="transmembrane region" description="Helical; Name=2" evidence="1">
    <location>
        <begin position="57"/>
        <end position="77"/>
    </location>
</feature>
<feature type="topological domain" description="Extracellular" evidence="1">
    <location>
        <begin position="78"/>
        <end position="101"/>
    </location>
</feature>
<feature type="transmembrane region" description="Helical; Name=3" evidence="1">
    <location>
        <begin position="102"/>
        <end position="122"/>
    </location>
</feature>
<feature type="topological domain" description="Cytoplasmic" evidence="1">
    <location>
        <begin position="123"/>
        <end position="141"/>
    </location>
</feature>
<feature type="transmembrane region" description="Helical; Name=4" evidence="1">
    <location>
        <begin position="142"/>
        <end position="162"/>
    </location>
</feature>
<feature type="topological domain" description="Extracellular" evidence="1">
    <location>
        <begin position="163"/>
        <end position="198"/>
    </location>
</feature>
<feature type="transmembrane region" description="Helical; Name=5" evidence="1">
    <location>
        <begin position="199"/>
        <end position="219"/>
    </location>
</feature>
<feature type="topological domain" description="Cytoplasmic" evidence="1">
    <location>
        <begin position="220"/>
        <end position="239"/>
    </location>
</feature>
<feature type="transmembrane region" description="Helical; Name=6" evidence="1">
    <location>
        <begin position="240"/>
        <end position="260"/>
    </location>
</feature>
<feature type="topological domain" description="Extracellular" evidence="1">
    <location>
        <begin position="261"/>
        <end position="273"/>
    </location>
</feature>
<feature type="transmembrane region" description="Helical; Name=7" evidence="1">
    <location>
        <begin position="274"/>
        <end position="294"/>
    </location>
</feature>
<feature type="topological domain" description="Cytoplasmic" evidence="1">
    <location>
        <begin position="295"/>
        <end position="314"/>
    </location>
</feature>
<feature type="glycosylation site" description="N-linked (GlcNAc...) asparagine" evidence="1">
    <location>
        <position position="7"/>
    </location>
</feature>
<feature type="glycosylation site" description="N-linked (GlcNAc...) asparagine" evidence="1">
    <location>
        <position position="169"/>
    </location>
</feature>
<feature type="sequence variant" id="VAR_034221" description="In dbSNP:rs297054." evidence="3">
    <original>S</original>
    <variation>A</variation>
    <location>
        <position position="249"/>
    </location>
</feature>
<feature type="sequence variant" id="VAR_034222" description="In dbSNP:rs297055.">
    <original>L</original>
    <variation>P</variation>
    <location>
        <position position="290"/>
    </location>
</feature>
<keyword id="KW-1003">Cell membrane</keyword>
<keyword id="KW-0297">G-protein coupled receptor</keyword>
<keyword id="KW-0325">Glycoprotein</keyword>
<keyword id="KW-0472">Membrane</keyword>
<keyword id="KW-0552">Olfaction</keyword>
<keyword id="KW-0675">Receptor</keyword>
<keyword id="KW-1185">Reference proteome</keyword>
<keyword id="KW-0716">Sensory transduction</keyword>
<keyword id="KW-0807">Transducer</keyword>
<keyword id="KW-0812">Transmembrane</keyword>
<keyword id="KW-1133">Transmembrane helix</keyword>
<organism>
    <name type="scientific">Homo sapiens</name>
    <name type="common">Human</name>
    <dbReference type="NCBI Taxonomy" id="9606"/>
    <lineage>
        <taxon>Eukaryota</taxon>
        <taxon>Metazoa</taxon>
        <taxon>Chordata</taxon>
        <taxon>Craniata</taxon>
        <taxon>Vertebrata</taxon>
        <taxon>Euteleostomi</taxon>
        <taxon>Mammalia</taxon>
        <taxon>Eutheria</taxon>
        <taxon>Euarchontoglires</taxon>
        <taxon>Primates</taxon>
        <taxon>Haplorrhini</taxon>
        <taxon>Catarrhini</taxon>
        <taxon>Hominidae</taxon>
        <taxon>Homo</taxon>
    </lineage>
</organism>
<name>OR5DE_HUMAN</name>
<comment type="function">
    <text evidence="4">Odorant receptor.</text>
</comment>
<comment type="subcellular location">
    <subcellularLocation>
        <location>Cell membrane</location>
        <topology>Multi-pass membrane protein</topology>
    </subcellularLocation>
</comment>
<comment type="similarity">
    <text evidence="2">Belongs to the G-protein coupled receptor 1 family.</text>
</comment>
<comment type="online information" name="Human Olfactory Receptor Data Exploratorium (HORDE)">
    <link uri="http://genome.weizmann.ac.il/horde/card/index/symbol:OR5D14"/>
</comment>
<gene>
    <name type="primary">OR5D14</name>
</gene>
<dbReference type="EMBL" id="AB065779">
    <property type="protein sequence ID" value="BAC05999.1"/>
    <property type="molecule type" value="Genomic_DNA"/>
</dbReference>
<dbReference type="EMBL" id="AF399523">
    <property type="protein sequence ID" value="AAK95008.1"/>
    <property type="molecule type" value="Genomic_DNA"/>
</dbReference>
<dbReference type="EMBL" id="BK004328">
    <property type="protein sequence ID" value="DAA04726.1"/>
    <property type="molecule type" value="Genomic_DNA"/>
</dbReference>
<dbReference type="EMBL" id="BK004393">
    <property type="protein sequence ID" value="DAA04791.1"/>
    <property type="molecule type" value="Genomic_DNA"/>
</dbReference>
<dbReference type="CCDS" id="CCDS31508.1"/>
<dbReference type="RefSeq" id="NP_001004735.1">
    <property type="nucleotide sequence ID" value="NM_001004735.1"/>
</dbReference>
<dbReference type="SMR" id="Q8NGL3"/>
<dbReference type="FunCoup" id="Q8NGL3">
    <property type="interactions" value="440"/>
</dbReference>
<dbReference type="STRING" id="9606.ENSP00000334456"/>
<dbReference type="GlyCosmos" id="Q8NGL3">
    <property type="glycosylation" value="2 sites, No reported glycans"/>
</dbReference>
<dbReference type="GlyGen" id="Q8NGL3">
    <property type="glycosylation" value="2 sites"/>
</dbReference>
<dbReference type="iPTMnet" id="Q8NGL3"/>
<dbReference type="PhosphoSitePlus" id="Q8NGL3"/>
<dbReference type="BioMuta" id="OR5D14"/>
<dbReference type="DMDM" id="38372722"/>
<dbReference type="MassIVE" id="Q8NGL3"/>
<dbReference type="PaxDb" id="9606-ENSP00000334456"/>
<dbReference type="PeptideAtlas" id="Q8NGL3"/>
<dbReference type="ProteomicsDB" id="73547"/>
<dbReference type="Antibodypedia" id="72059">
    <property type="antibodies" value="17 antibodies from 10 providers"/>
</dbReference>
<dbReference type="DNASU" id="219436"/>
<dbReference type="Ensembl" id="ENST00000335605.1">
    <property type="protein sequence ID" value="ENSP00000334456.1"/>
    <property type="gene ID" value="ENSG00000186113.1"/>
</dbReference>
<dbReference type="GeneID" id="219436"/>
<dbReference type="KEGG" id="hsa:219436"/>
<dbReference type="MANE-Select" id="ENST00000335605.1">
    <property type="protein sequence ID" value="ENSP00000334456.1"/>
    <property type="RefSeq nucleotide sequence ID" value="NM_001004735.1"/>
    <property type="RefSeq protein sequence ID" value="NP_001004735.1"/>
</dbReference>
<dbReference type="UCSC" id="uc010rim.2">
    <property type="organism name" value="human"/>
</dbReference>
<dbReference type="AGR" id="HGNC:15281"/>
<dbReference type="CTD" id="219436"/>
<dbReference type="GeneCards" id="OR5D14"/>
<dbReference type="HGNC" id="HGNC:15281">
    <property type="gene designation" value="OR5D14"/>
</dbReference>
<dbReference type="HPA" id="ENSG00000186113">
    <property type="expression patterns" value="Not detected"/>
</dbReference>
<dbReference type="neXtProt" id="NX_Q8NGL3"/>
<dbReference type="PharmGKB" id="PA32517"/>
<dbReference type="VEuPathDB" id="HostDB:ENSG00000186113"/>
<dbReference type="eggNOG" id="ENOG502T6WP">
    <property type="taxonomic scope" value="Eukaryota"/>
</dbReference>
<dbReference type="GeneTree" id="ENSGT01130000278300"/>
<dbReference type="HOGENOM" id="CLU_012526_5_5_1"/>
<dbReference type="InParanoid" id="Q8NGL3"/>
<dbReference type="OMA" id="CMMQYFL"/>
<dbReference type="OrthoDB" id="9444602at2759"/>
<dbReference type="PAN-GO" id="Q8NGL3">
    <property type="GO annotations" value="4 GO annotations based on evolutionary models"/>
</dbReference>
<dbReference type="PhylomeDB" id="Q8NGL3"/>
<dbReference type="TreeFam" id="TF352746"/>
<dbReference type="PathwayCommons" id="Q8NGL3"/>
<dbReference type="Reactome" id="R-HSA-381753">
    <property type="pathway name" value="Olfactory Signaling Pathway"/>
</dbReference>
<dbReference type="Reactome" id="R-HSA-9752946">
    <property type="pathway name" value="Expression and translocation of olfactory receptors"/>
</dbReference>
<dbReference type="BioGRID-ORCS" id="219436">
    <property type="hits" value="8 hits in 736 CRISPR screens"/>
</dbReference>
<dbReference type="GeneWiki" id="OR5D14"/>
<dbReference type="GenomeRNAi" id="219436"/>
<dbReference type="Pharos" id="Q8NGL3">
    <property type="development level" value="Tdark"/>
</dbReference>
<dbReference type="PRO" id="PR:Q8NGL3"/>
<dbReference type="Proteomes" id="UP000005640">
    <property type="component" value="Chromosome 11"/>
</dbReference>
<dbReference type="RNAct" id="Q8NGL3">
    <property type="molecule type" value="protein"/>
</dbReference>
<dbReference type="Bgee" id="ENSG00000186113">
    <property type="expression patterns" value="Expressed in male germ line stem cell (sensu Vertebrata) in testis and 1 other cell type or tissue"/>
</dbReference>
<dbReference type="GO" id="GO:0005886">
    <property type="term" value="C:plasma membrane"/>
    <property type="evidence" value="ECO:0000304"/>
    <property type="project" value="Reactome"/>
</dbReference>
<dbReference type="GO" id="GO:0004930">
    <property type="term" value="F:G protein-coupled receptor activity"/>
    <property type="evidence" value="ECO:0007669"/>
    <property type="project" value="UniProtKB-KW"/>
</dbReference>
<dbReference type="GO" id="GO:0005549">
    <property type="term" value="F:odorant binding"/>
    <property type="evidence" value="ECO:0000318"/>
    <property type="project" value="GO_Central"/>
</dbReference>
<dbReference type="GO" id="GO:0004984">
    <property type="term" value="F:olfactory receptor activity"/>
    <property type="evidence" value="ECO:0000318"/>
    <property type="project" value="GO_Central"/>
</dbReference>
<dbReference type="GO" id="GO:0007186">
    <property type="term" value="P:G protein-coupled receptor signaling pathway"/>
    <property type="evidence" value="ECO:0000318"/>
    <property type="project" value="GO_Central"/>
</dbReference>
<dbReference type="GO" id="GO:0007608">
    <property type="term" value="P:sensory perception of smell"/>
    <property type="evidence" value="ECO:0000318"/>
    <property type="project" value="GO_Central"/>
</dbReference>
<dbReference type="CDD" id="cd15410">
    <property type="entry name" value="7tmA_OR5D-like"/>
    <property type="match status" value="1"/>
</dbReference>
<dbReference type="FunFam" id="1.20.1070.10:FF:000003">
    <property type="entry name" value="Olfactory receptor"/>
    <property type="match status" value="1"/>
</dbReference>
<dbReference type="Gene3D" id="1.20.1070.10">
    <property type="entry name" value="Rhodopsin 7-helix transmembrane proteins"/>
    <property type="match status" value="1"/>
</dbReference>
<dbReference type="InterPro" id="IPR000276">
    <property type="entry name" value="GPCR_Rhodpsn"/>
</dbReference>
<dbReference type="InterPro" id="IPR017452">
    <property type="entry name" value="GPCR_Rhodpsn_7TM"/>
</dbReference>
<dbReference type="InterPro" id="IPR000725">
    <property type="entry name" value="Olfact_rcpt"/>
</dbReference>
<dbReference type="PANTHER" id="PTHR48018">
    <property type="entry name" value="OLFACTORY RECEPTOR"/>
    <property type="match status" value="1"/>
</dbReference>
<dbReference type="Pfam" id="PF13853">
    <property type="entry name" value="7tm_4"/>
    <property type="match status" value="1"/>
</dbReference>
<dbReference type="PRINTS" id="PR00237">
    <property type="entry name" value="GPCRRHODOPSN"/>
</dbReference>
<dbReference type="PRINTS" id="PR00245">
    <property type="entry name" value="OLFACTORYR"/>
</dbReference>
<dbReference type="SUPFAM" id="SSF81321">
    <property type="entry name" value="Family A G protein-coupled receptor-like"/>
    <property type="match status" value="1"/>
</dbReference>
<dbReference type="PROSITE" id="PS00237">
    <property type="entry name" value="G_PROTEIN_RECEP_F1_1"/>
    <property type="match status" value="1"/>
</dbReference>
<dbReference type="PROSITE" id="PS50262">
    <property type="entry name" value="G_PROTEIN_RECEP_F1_2"/>
    <property type="match status" value="1"/>
</dbReference>
<reference key="1">
    <citation type="submission" date="2001-07" db="EMBL/GenBank/DDBJ databases">
        <title>Genome-wide discovery and analysis of human seven transmembrane helix receptor genes.</title>
        <authorList>
            <person name="Suwa M."/>
            <person name="Sato T."/>
            <person name="Okouchi I."/>
            <person name="Arita M."/>
            <person name="Futami K."/>
            <person name="Matsumoto S."/>
            <person name="Tsutsumi S."/>
            <person name="Aburatani H."/>
            <person name="Asai K."/>
            <person name="Akiyama Y."/>
        </authorList>
    </citation>
    <scope>NUCLEOTIDE SEQUENCE [GENOMIC DNA]</scope>
</reference>
<reference key="2">
    <citation type="journal article" date="2002" name="Genomics">
        <title>DEFOG: a practical scheme for deciphering families of genes.</title>
        <authorList>
            <person name="Fuchs T."/>
            <person name="Malecova B."/>
            <person name="Linhart C."/>
            <person name="Sharan R."/>
            <person name="Khen M."/>
            <person name="Herwig R."/>
            <person name="Shmulevich D."/>
            <person name="Elkon R."/>
            <person name="Steinfath M."/>
            <person name="O'Brien J.K."/>
            <person name="Radelof U."/>
            <person name="Lehrach H."/>
            <person name="Lancet D."/>
            <person name="Shamir R."/>
        </authorList>
    </citation>
    <scope>NUCLEOTIDE SEQUENCE [GENOMIC DNA] OF 70-285</scope>
    <scope>VARIANT ALA-249</scope>
</reference>
<reference key="3">
    <citation type="journal article" date="2004" name="Proc. Natl. Acad. Sci. U.S.A.">
        <title>The human olfactory receptor gene family.</title>
        <authorList>
            <person name="Malnic B."/>
            <person name="Godfrey P.A."/>
            <person name="Buck L.B."/>
        </authorList>
    </citation>
    <scope>IDENTIFICATION</scope>
</reference>
<reference key="4">
    <citation type="journal article" date="2004" name="Proc. Natl. Acad. Sci. U.S.A.">
        <authorList>
            <person name="Malnic B."/>
            <person name="Godfrey P.A."/>
            <person name="Buck L.B."/>
        </authorList>
    </citation>
    <scope>ERRATUM OF PUBMED:14983052</scope>
</reference>
<accession>Q8NGL3</accession>
<accession>Q6IF69</accession>
<accession>Q6IFD4</accession>
<accession>Q96RB5</accession>
<proteinExistence type="inferred from homology"/>